<organism>
    <name type="scientific">Salmonella gallinarum (strain 287/91 / NCTC 13346)</name>
    <dbReference type="NCBI Taxonomy" id="550538"/>
    <lineage>
        <taxon>Bacteria</taxon>
        <taxon>Pseudomonadati</taxon>
        <taxon>Pseudomonadota</taxon>
        <taxon>Gammaproteobacteria</taxon>
        <taxon>Enterobacterales</taxon>
        <taxon>Enterobacteriaceae</taxon>
        <taxon>Salmonella</taxon>
    </lineage>
</organism>
<dbReference type="EMBL" id="AM933173">
    <property type="protein sequence ID" value="CAR37052.1"/>
    <property type="molecule type" value="Genomic_DNA"/>
</dbReference>
<dbReference type="RefSeq" id="WP_001042123.1">
    <property type="nucleotide sequence ID" value="NC_011274.1"/>
</dbReference>
<dbReference type="SMR" id="B5R8F6"/>
<dbReference type="KEGG" id="seg:SG1171"/>
<dbReference type="HOGENOM" id="CLU_161319_1_0_6"/>
<dbReference type="Proteomes" id="UP000008321">
    <property type="component" value="Chromosome"/>
</dbReference>
<dbReference type="GO" id="GO:0005576">
    <property type="term" value="C:extracellular region"/>
    <property type="evidence" value="ECO:0007669"/>
    <property type="project" value="UniProtKB-SubCell"/>
</dbReference>
<dbReference type="Gene3D" id="3.10.450.300">
    <property type="entry name" value="YebF/Colicin-M immunity protein"/>
    <property type="match status" value="1"/>
</dbReference>
<dbReference type="HAMAP" id="MF_01435">
    <property type="entry name" value="YebF"/>
    <property type="match status" value="1"/>
</dbReference>
<dbReference type="InterPro" id="IPR020236">
    <property type="entry name" value="Uncharacterised_YebF"/>
</dbReference>
<dbReference type="InterPro" id="IPR038703">
    <property type="entry name" value="YebF/Cmi_sf"/>
</dbReference>
<dbReference type="InterPro" id="IPR025603">
    <property type="entry name" value="YebF/ColM_immunity"/>
</dbReference>
<dbReference type="NCBIfam" id="NF010224">
    <property type="entry name" value="PRK13680.1"/>
    <property type="match status" value="1"/>
</dbReference>
<dbReference type="NCBIfam" id="NF041240">
    <property type="entry name" value="YebF_not_Cmi"/>
    <property type="match status" value="1"/>
</dbReference>
<dbReference type="Pfam" id="PF13995">
    <property type="entry name" value="YebF"/>
    <property type="match status" value="1"/>
</dbReference>
<dbReference type="PROSITE" id="PS51979">
    <property type="entry name" value="YEBF_CMI"/>
    <property type="match status" value="1"/>
</dbReference>
<name>YEBF_SALG2</name>
<accession>B5R8F6</accession>
<sequence length="117" mass="12774">MNKRGALLSLLLLSASVSAFAASTESKSVKFPQCEGLDAAGIAASVKRDYQQNRIVRWADDQKKVGQADPVAWVNVQDVVGQNDKWTVPLTVRGKSADIHYQVIVDCKAGKAEYKPR</sequence>
<reference key="1">
    <citation type="journal article" date="2008" name="Genome Res.">
        <title>Comparative genome analysis of Salmonella enteritidis PT4 and Salmonella gallinarum 287/91 provides insights into evolutionary and host adaptation pathways.</title>
        <authorList>
            <person name="Thomson N.R."/>
            <person name="Clayton D.J."/>
            <person name="Windhorst D."/>
            <person name="Vernikos G."/>
            <person name="Davidson S."/>
            <person name="Churcher C."/>
            <person name="Quail M.A."/>
            <person name="Stevens M."/>
            <person name="Jones M.A."/>
            <person name="Watson M."/>
            <person name="Barron A."/>
            <person name="Layton A."/>
            <person name="Pickard D."/>
            <person name="Kingsley R.A."/>
            <person name="Bignell A."/>
            <person name="Clark L."/>
            <person name="Harris B."/>
            <person name="Ormond D."/>
            <person name="Abdellah Z."/>
            <person name="Brooks K."/>
            <person name="Cherevach I."/>
            <person name="Chillingworth T."/>
            <person name="Woodward J."/>
            <person name="Norberczak H."/>
            <person name="Lord A."/>
            <person name="Arrowsmith C."/>
            <person name="Jagels K."/>
            <person name="Moule S."/>
            <person name="Mungall K."/>
            <person name="Saunders M."/>
            <person name="Whitehead S."/>
            <person name="Chabalgoity J.A."/>
            <person name="Maskell D."/>
            <person name="Humphreys T."/>
            <person name="Roberts M."/>
            <person name="Barrow P.A."/>
            <person name="Dougan G."/>
            <person name="Parkhill J."/>
        </authorList>
    </citation>
    <scope>NUCLEOTIDE SEQUENCE [LARGE SCALE GENOMIC DNA]</scope>
    <source>
        <strain>287/91 / NCTC 13346</strain>
    </source>
</reference>
<protein>
    <recommendedName>
        <fullName evidence="1">Protein YebF</fullName>
    </recommendedName>
</protein>
<comment type="subcellular location">
    <subcellularLocation>
        <location evidence="1">Secreted</location>
    </subcellularLocation>
</comment>
<comment type="similarity">
    <text evidence="1">Belongs to the YebF family.</text>
</comment>
<feature type="signal peptide" evidence="1">
    <location>
        <begin position="1"/>
        <end position="21"/>
    </location>
</feature>
<feature type="chain" id="PRO_5000398125" description="Protein YebF">
    <location>
        <begin position="22"/>
        <end position="117"/>
    </location>
</feature>
<feature type="domain" description="YebF/Cmi" evidence="2">
    <location>
        <begin position="30"/>
        <end position="117"/>
    </location>
</feature>
<feature type="disulfide bond" evidence="2">
    <location>
        <begin position="34"/>
        <end position="107"/>
    </location>
</feature>
<evidence type="ECO:0000255" key="1">
    <source>
        <dbReference type="HAMAP-Rule" id="MF_01435"/>
    </source>
</evidence>
<evidence type="ECO:0000255" key="2">
    <source>
        <dbReference type="PROSITE-ProRule" id="PRU01323"/>
    </source>
</evidence>
<keyword id="KW-1015">Disulfide bond</keyword>
<keyword id="KW-0964">Secreted</keyword>
<keyword id="KW-0732">Signal</keyword>
<proteinExistence type="inferred from homology"/>
<gene>
    <name evidence="1" type="primary">yebF</name>
    <name type="ordered locus">SG1171</name>
</gene>